<comment type="function">
    <text evidence="1">Stabilizes the manganese cluster which is the primary site of water splitting.</text>
</comment>
<comment type="subunit">
    <text>Monomer.</text>
</comment>
<comment type="subcellular location">
    <subcellularLocation>
        <location>Plastid</location>
        <location>Chloroplast thylakoid membrane</location>
    </subcellularLocation>
    <text>Associated with the photosystem II complex.</text>
</comment>
<comment type="similarity">
    <text evidence="3">Belongs to the PsbO family.</text>
</comment>
<comment type="sequence caution" evidence="3">
    <conflict type="erroneous initiation">
        <sequence resource="EMBL-CDS" id="BAA03529"/>
    </conflict>
</comment>
<gene>
    <name type="primary">PSBO</name>
</gene>
<sequence>MSRVNLAAPANHVVPRAAQEEVQGEYQTASNNWAVAAMASAGAAVGAAVLAMRRRATNTYEAIREDPEAVLAGAGRAMGAALIGAAVAGSANAASLTYDELQSLSYLEVKSSGIAGTCPVLADGVSSKLSLKAGKYEINNWCLEPSSFQVKLPPTEKQQVTEFERTKLMTRLTYTLDAISADLNVGGDGSWTIQEKDGLDYAATTVQLAGGERVPFLFTIKNLLAKGDAGQFLGQFDVPSYRGATFLDPKGRGGASGYDTAVALPASGDDEEYAKENSKSTAASVGTIAFKVAKVNAETGEIAGVFESIQPSDTDLGAKVPKDIKTSGVWYAQISPSK</sequence>
<dbReference type="EMBL" id="D14702">
    <property type="protein sequence ID" value="BAA03529.2"/>
    <property type="status" value="ALT_INIT"/>
    <property type="molecule type" value="mRNA"/>
</dbReference>
<dbReference type="PIR" id="S42640">
    <property type="entry name" value="S42640"/>
</dbReference>
<dbReference type="SMR" id="P46483"/>
<dbReference type="GO" id="GO:0009535">
    <property type="term" value="C:chloroplast thylakoid membrane"/>
    <property type="evidence" value="ECO:0007669"/>
    <property type="project" value="UniProtKB-SubCell"/>
</dbReference>
<dbReference type="GO" id="GO:0009654">
    <property type="term" value="C:photosystem II oxygen evolving complex"/>
    <property type="evidence" value="ECO:0007669"/>
    <property type="project" value="InterPro"/>
</dbReference>
<dbReference type="GO" id="GO:0010242">
    <property type="term" value="F:oxygen evolving activity"/>
    <property type="evidence" value="ECO:0007669"/>
    <property type="project" value="InterPro"/>
</dbReference>
<dbReference type="GO" id="GO:0010207">
    <property type="term" value="P:photosystem II assembly"/>
    <property type="evidence" value="ECO:0007669"/>
    <property type="project" value="InterPro"/>
</dbReference>
<dbReference type="GO" id="GO:0042549">
    <property type="term" value="P:photosystem II stabilization"/>
    <property type="evidence" value="ECO:0007669"/>
    <property type="project" value="InterPro"/>
</dbReference>
<dbReference type="Gene3D" id="3.30.2050.10">
    <property type="entry name" value="photosynthetic oxygen evolving center domain"/>
    <property type="match status" value="1"/>
</dbReference>
<dbReference type="Gene3D" id="2.40.160.30">
    <property type="entry name" value="Photosystem II, cytochrome c-550 precursor"/>
    <property type="match status" value="1"/>
</dbReference>
<dbReference type="InterPro" id="IPR011250">
    <property type="entry name" value="OMP/PagP_b-brl"/>
</dbReference>
<dbReference type="InterPro" id="IPR002628">
    <property type="entry name" value="PsbO"/>
</dbReference>
<dbReference type="PANTHER" id="PTHR34058">
    <property type="entry name" value="OXYGEN-EVOLVING ENHANCER PROTEIN 1-2, CHLOROPLASTIC"/>
    <property type="match status" value="1"/>
</dbReference>
<dbReference type="Pfam" id="PF01716">
    <property type="entry name" value="MSP"/>
    <property type="match status" value="1"/>
</dbReference>
<dbReference type="SUPFAM" id="SSF56925">
    <property type="entry name" value="OMPA-like"/>
    <property type="match status" value="1"/>
</dbReference>
<protein>
    <recommendedName>
        <fullName>Oxygen-evolving enhancer protein 1, chloroplastic</fullName>
        <shortName>OEE1</shortName>
    </recommendedName>
</protein>
<proteinExistence type="evidence at protein level"/>
<name>PSBO_EUGGR</name>
<evidence type="ECO:0000250" key="1"/>
<evidence type="ECO:0000269" key="2">
    <source>
    </source>
</evidence>
<evidence type="ECO:0000305" key="3"/>
<feature type="transit peptide" description="Chloroplast" evidence="2">
    <location>
        <begin position="1"/>
        <end position="93"/>
    </location>
</feature>
<feature type="chain" id="PRO_0000029556" description="Oxygen-evolving enhancer protein 1, chloroplastic">
    <location>
        <begin position="94"/>
        <end position="338"/>
    </location>
</feature>
<reference key="1">
    <citation type="journal article" date="1994" name="Plant Mol. Biol.">
        <title>The presequence of the precursor to the nucleus-encoded 30 kDa protein of photosystem II in Euglena gracilis Z includes two hydrophobic domains.</title>
        <authorList>
            <person name="Shigemori Y."/>
            <person name="Inagaki J."/>
            <person name="Mori H."/>
            <person name="Nishimura M."/>
            <person name="Takahashi S."/>
            <person name="Yamamoto Y."/>
        </authorList>
    </citation>
    <scope>NUCLEOTIDE SEQUENCE [MRNA]</scope>
    <scope>PROTEIN SEQUENCE OF 94-110</scope>
    <source>
        <strain>Z / UTEX 753</strain>
    </source>
</reference>
<accession>P46483</accession>
<organism>
    <name type="scientific">Euglena gracilis</name>
    <dbReference type="NCBI Taxonomy" id="3039"/>
    <lineage>
        <taxon>Eukaryota</taxon>
        <taxon>Discoba</taxon>
        <taxon>Euglenozoa</taxon>
        <taxon>Euglenida</taxon>
        <taxon>Spirocuta</taxon>
        <taxon>Euglenophyceae</taxon>
        <taxon>Euglenales</taxon>
        <taxon>Euglenaceae</taxon>
        <taxon>Euglena</taxon>
    </lineage>
</organism>
<keyword id="KW-0150">Chloroplast</keyword>
<keyword id="KW-0903">Direct protein sequencing</keyword>
<keyword id="KW-0464">Manganese</keyword>
<keyword id="KW-0472">Membrane</keyword>
<keyword id="KW-0602">Photosynthesis</keyword>
<keyword id="KW-0604">Photosystem II</keyword>
<keyword id="KW-0934">Plastid</keyword>
<keyword id="KW-0793">Thylakoid</keyword>
<keyword id="KW-0809">Transit peptide</keyword>